<gene>
    <name evidence="1" type="primary">hemE</name>
    <name type="ordered locus">Z5572</name>
    <name type="ordered locus">ECs4920</name>
</gene>
<accession>Q8X6X5</accession>
<dbReference type="EC" id="4.1.1.37" evidence="1"/>
<dbReference type="EMBL" id="AE005174">
    <property type="protein sequence ID" value="AAG59194.1"/>
    <property type="molecule type" value="Genomic_DNA"/>
</dbReference>
<dbReference type="EMBL" id="BA000007">
    <property type="protein sequence ID" value="BAB38343.1"/>
    <property type="molecule type" value="Genomic_DNA"/>
</dbReference>
<dbReference type="PIR" id="F86091">
    <property type="entry name" value="F86091"/>
</dbReference>
<dbReference type="PIR" id="H91243">
    <property type="entry name" value="H91243"/>
</dbReference>
<dbReference type="RefSeq" id="NP_312947.1">
    <property type="nucleotide sequence ID" value="NC_002695.1"/>
</dbReference>
<dbReference type="RefSeq" id="WP_000137640.1">
    <property type="nucleotide sequence ID" value="NZ_VOAI01000037.1"/>
</dbReference>
<dbReference type="SMR" id="Q8X6X5"/>
<dbReference type="STRING" id="155864.Z5572"/>
<dbReference type="GeneID" id="914940"/>
<dbReference type="KEGG" id="ece:Z5572"/>
<dbReference type="KEGG" id="ecs:ECs_4920"/>
<dbReference type="PATRIC" id="fig|386585.9.peg.5145"/>
<dbReference type="eggNOG" id="COG0407">
    <property type="taxonomic scope" value="Bacteria"/>
</dbReference>
<dbReference type="HOGENOM" id="CLU_040933_0_0_6"/>
<dbReference type="OMA" id="LWLMRQA"/>
<dbReference type="UniPathway" id="UPA00251">
    <property type="reaction ID" value="UER00321"/>
</dbReference>
<dbReference type="Proteomes" id="UP000000558">
    <property type="component" value="Chromosome"/>
</dbReference>
<dbReference type="Proteomes" id="UP000002519">
    <property type="component" value="Chromosome"/>
</dbReference>
<dbReference type="GO" id="GO:0005829">
    <property type="term" value="C:cytosol"/>
    <property type="evidence" value="ECO:0007669"/>
    <property type="project" value="TreeGrafter"/>
</dbReference>
<dbReference type="GO" id="GO:0004853">
    <property type="term" value="F:uroporphyrinogen decarboxylase activity"/>
    <property type="evidence" value="ECO:0007669"/>
    <property type="project" value="UniProtKB-UniRule"/>
</dbReference>
<dbReference type="GO" id="GO:0019353">
    <property type="term" value="P:protoporphyrinogen IX biosynthetic process from glutamate"/>
    <property type="evidence" value="ECO:0007669"/>
    <property type="project" value="TreeGrafter"/>
</dbReference>
<dbReference type="CDD" id="cd00717">
    <property type="entry name" value="URO-D"/>
    <property type="match status" value="1"/>
</dbReference>
<dbReference type="FunFam" id="3.20.20.210:FF:000001">
    <property type="entry name" value="Uroporphyrinogen decarboxylase"/>
    <property type="match status" value="1"/>
</dbReference>
<dbReference type="Gene3D" id="3.20.20.210">
    <property type="match status" value="1"/>
</dbReference>
<dbReference type="HAMAP" id="MF_00218">
    <property type="entry name" value="URO_D"/>
    <property type="match status" value="1"/>
</dbReference>
<dbReference type="InterPro" id="IPR038071">
    <property type="entry name" value="UROD/MetE-like_sf"/>
</dbReference>
<dbReference type="InterPro" id="IPR006361">
    <property type="entry name" value="Uroporphyrinogen_deCO2ase_HemE"/>
</dbReference>
<dbReference type="InterPro" id="IPR000257">
    <property type="entry name" value="Uroporphyrinogen_deCOase"/>
</dbReference>
<dbReference type="NCBIfam" id="TIGR01464">
    <property type="entry name" value="hemE"/>
    <property type="match status" value="1"/>
</dbReference>
<dbReference type="PANTHER" id="PTHR21091">
    <property type="entry name" value="METHYLTETRAHYDROFOLATE:HOMOCYSTEINE METHYLTRANSFERASE RELATED"/>
    <property type="match status" value="1"/>
</dbReference>
<dbReference type="PANTHER" id="PTHR21091:SF169">
    <property type="entry name" value="UROPORPHYRINOGEN DECARBOXYLASE"/>
    <property type="match status" value="1"/>
</dbReference>
<dbReference type="Pfam" id="PF01208">
    <property type="entry name" value="URO-D"/>
    <property type="match status" value="1"/>
</dbReference>
<dbReference type="SUPFAM" id="SSF51726">
    <property type="entry name" value="UROD/MetE-like"/>
    <property type="match status" value="1"/>
</dbReference>
<dbReference type="PROSITE" id="PS00906">
    <property type="entry name" value="UROD_1"/>
    <property type="match status" value="1"/>
</dbReference>
<dbReference type="PROSITE" id="PS00907">
    <property type="entry name" value="UROD_2"/>
    <property type="match status" value="1"/>
</dbReference>
<proteinExistence type="inferred from homology"/>
<feature type="chain" id="PRO_0000187605" description="Uroporphyrinogen decarboxylase">
    <location>
        <begin position="1"/>
        <end position="354"/>
    </location>
</feature>
<feature type="binding site" evidence="1">
    <location>
        <begin position="27"/>
        <end position="31"/>
    </location>
    <ligand>
        <name>substrate</name>
    </ligand>
</feature>
<feature type="binding site" evidence="1">
    <location>
        <position position="46"/>
    </location>
    <ligand>
        <name>substrate</name>
    </ligand>
</feature>
<feature type="binding site" evidence="1">
    <location>
        <position position="77"/>
    </location>
    <ligand>
        <name>substrate</name>
    </ligand>
</feature>
<feature type="binding site" evidence="1">
    <location>
        <position position="154"/>
    </location>
    <ligand>
        <name>substrate</name>
    </ligand>
</feature>
<feature type="binding site" evidence="1">
    <location>
        <position position="209"/>
    </location>
    <ligand>
        <name>substrate</name>
    </ligand>
</feature>
<feature type="binding site" evidence="1">
    <location>
        <position position="327"/>
    </location>
    <ligand>
        <name>substrate</name>
    </ligand>
</feature>
<feature type="site" description="Transition state stabilizer" evidence="1">
    <location>
        <position position="77"/>
    </location>
</feature>
<sequence>MTELKNDRYLRALLRQPVDVTPVWMMRQAGRYLPEYKATRAQAGDFMSLCKNAELACEVTLQPLRRYPLDAAILFSDILTVPDAMGLGLYFEAGEGPRFTSPVTCKADVDKLPIPDPEDELGYVMNAVRTIRRELKGEVPLIGFSGSPWTLATYMVEGGSSKAFTVIKKMMYADPQALHALLDKLAKSVALYLNAQIKAGAQAVMIFDTWGGVLTGRDYQQFSLYYMHKIVDGLLRENDGRRVPVTLFTKGGGQWLEAMAETGCDALGLDWTTDIADARRRVGNKVALQGNMDPSMLYAPPARIEEEVATILAGFGHGEGHVFNLGHGIHQDVPPEHAGVFVEAVHRLSEQYHR</sequence>
<protein>
    <recommendedName>
        <fullName evidence="1">Uroporphyrinogen decarboxylase</fullName>
        <shortName evidence="1">UPD</shortName>
        <shortName evidence="1">URO-D</shortName>
        <ecNumber evidence="1">4.1.1.37</ecNumber>
    </recommendedName>
</protein>
<comment type="function">
    <text evidence="1">Catalyzes the decarboxylation of four acetate groups of uroporphyrinogen-III to yield coproporphyrinogen-III.</text>
</comment>
<comment type="catalytic activity">
    <reaction evidence="1">
        <text>uroporphyrinogen III + 4 H(+) = coproporphyrinogen III + 4 CO2</text>
        <dbReference type="Rhea" id="RHEA:19865"/>
        <dbReference type="ChEBI" id="CHEBI:15378"/>
        <dbReference type="ChEBI" id="CHEBI:16526"/>
        <dbReference type="ChEBI" id="CHEBI:57308"/>
        <dbReference type="ChEBI" id="CHEBI:57309"/>
        <dbReference type="EC" id="4.1.1.37"/>
    </reaction>
</comment>
<comment type="pathway">
    <text evidence="1">Porphyrin-containing compound metabolism; protoporphyrin-IX biosynthesis; coproporphyrinogen-III from 5-aminolevulinate: step 4/4.</text>
</comment>
<comment type="subunit">
    <text evidence="1">Homodimer.</text>
</comment>
<comment type="subcellular location">
    <subcellularLocation>
        <location evidence="1">Cytoplasm</location>
    </subcellularLocation>
</comment>
<comment type="similarity">
    <text evidence="1">Belongs to the uroporphyrinogen decarboxylase family.</text>
</comment>
<name>DCUP_ECO57</name>
<reference key="1">
    <citation type="journal article" date="2001" name="Nature">
        <title>Genome sequence of enterohaemorrhagic Escherichia coli O157:H7.</title>
        <authorList>
            <person name="Perna N.T."/>
            <person name="Plunkett G. III"/>
            <person name="Burland V."/>
            <person name="Mau B."/>
            <person name="Glasner J.D."/>
            <person name="Rose D.J."/>
            <person name="Mayhew G.F."/>
            <person name="Evans P.S."/>
            <person name="Gregor J."/>
            <person name="Kirkpatrick H.A."/>
            <person name="Posfai G."/>
            <person name="Hackett J."/>
            <person name="Klink S."/>
            <person name="Boutin A."/>
            <person name="Shao Y."/>
            <person name="Miller L."/>
            <person name="Grotbeck E.J."/>
            <person name="Davis N.W."/>
            <person name="Lim A."/>
            <person name="Dimalanta E.T."/>
            <person name="Potamousis K."/>
            <person name="Apodaca J."/>
            <person name="Anantharaman T.S."/>
            <person name="Lin J."/>
            <person name="Yen G."/>
            <person name="Schwartz D.C."/>
            <person name="Welch R.A."/>
            <person name="Blattner F.R."/>
        </authorList>
    </citation>
    <scope>NUCLEOTIDE SEQUENCE [LARGE SCALE GENOMIC DNA]</scope>
    <source>
        <strain>O157:H7 / EDL933 / ATCC 700927 / EHEC</strain>
    </source>
</reference>
<reference key="2">
    <citation type="journal article" date="2001" name="DNA Res.">
        <title>Complete genome sequence of enterohemorrhagic Escherichia coli O157:H7 and genomic comparison with a laboratory strain K-12.</title>
        <authorList>
            <person name="Hayashi T."/>
            <person name="Makino K."/>
            <person name="Ohnishi M."/>
            <person name="Kurokawa K."/>
            <person name="Ishii K."/>
            <person name="Yokoyama K."/>
            <person name="Han C.-G."/>
            <person name="Ohtsubo E."/>
            <person name="Nakayama K."/>
            <person name="Murata T."/>
            <person name="Tanaka M."/>
            <person name="Tobe T."/>
            <person name="Iida T."/>
            <person name="Takami H."/>
            <person name="Honda T."/>
            <person name="Sasakawa C."/>
            <person name="Ogasawara N."/>
            <person name="Yasunaga T."/>
            <person name="Kuhara S."/>
            <person name="Shiba T."/>
            <person name="Hattori M."/>
            <person name="Shinagawa H."/>
        </authorList>
    </citation>
    <scope>NUCLEOTIDE SEQUENCE [LARGE SCALE GENOMIC DNA]</scope>
    <source>
        <strain>O157:H7 / Sakai / RIMD 0509952 / EHEC</strain>
    </source>
</reference>
<evidence type="ECO:0000255" key="1">
    <source>
        <dbReference type="HAMAP-Rule" id="MF_00218"/>
    </source>
</evidence>
<organism>
    <name type="scientific">Escherichia coli O157:H7</name>
    <dbReference type="NCBI Taxonomy" id="83334"/>
    <lineage>
        <taxon>Bacteria</taxon>
        <taxon>Pseudomonadati</taxon>
        <taxon>Pseudomonadota</taxon>
        <taxon>Gammaproteobacteria</taxon>
        <taxon>Enterobacterales</taxon>
        <taxon>Enterobacteriaceae</taxon>
        <taxon>Escherichia</taxon>
    </lineage>
</organism>
<keyword id="KW-0963">Cytoplasm</keyword>
<keyword id="KW-0210">Decarboxylase</keyword>
<keyword id="KW-0456">Lyase</keyword>
<keyword id="KW-0627">Porphyrin biosynthesis</keyword>
<keyword id="KW-1185">Reference proteome</keyword>